<sequence>MASHKITLLTGDGIGPEISIVAKKILAALSEKHSITFTIEEKPFGGQAIELTGKPLPEDTLNSCKASDAVLLAAIGDPKYDDLPRDLRPETGLLNLRAGLNLFANIRPIKIRQALISSSSLKSEIIKDVDLVVVRELTGGIYFGQPKGRISTEEAGERAFNTMTYSDYEIDRIAKIAFDLSETRRKKICSIDKANVLEVSQLWRERVIKAQEQYPNIELTHQYVDNAAMQLVREPAQFDVILTSNLFGDIISDEAAMLTGSIGMLPSASLGEDGPGVFEPVHGSAPDIAHKNLANPIAMILSTAMMLRTGLMEYKAATDLENAIDKVLGKGFRTIDLNRDQSNTKLGCREMGDQIIKAINGI</sequence>
<gene>
    <name evidence="1" type="primary">leuB</name>
    <name type="ordered locus">Pro_0862</name>
</gene>
<comment type="function">
    <text evidence="1">Catalyzes the oxidation of 3-carboxy-2-hydroxy-4-methylpentanoate (3-isopropylmalate) to 3-carboxy-4-methyl-2-oxopentanoate. The product decarboxylates to 4-methyl-2 oxopentanoate.</text>
</comment>
<comment type="catalytic activity">
    <reaction evidence="1">
        <text>(2R,3S)-3-isopropylmalate + NAD(+) = 4-methyl-2-oxopentanoate + CO2 + NADH</text>
        <dbReference type="Rhea" id="RHEA:32271"/>
        <dbReference type="ChEBI" id="CHEBI:16526"/>
        <dbReference type="ChEBI" id="CHEBI:17865"/>
        <dbReference type="ChEBI" id="CHEBI:35121"/>
        <dbReference type="ChEBI" id="CHEBI:57540"/>
        <dbReference type="ChEBI" id="CHEBI:57945"/>
        <dbReference type="EC" id="1.1.1.85"/>
    </reaction>
</comment>
<comment type="cofactor">
    <cofactor evidence="1">
        <name>Mg(2+)</name>
        <dbReference type="ChEBI" id="CHEBI:18420"/>
    </cofactor>
    <cofactor evidence="1">
        <name>Mn(2+)</name>
        <dbReference type="ChEBI" id="CHEBI:29035"/>
    </cofactor>
    <text evidence="1">Binds 1 Mg(2+) or Mn(2+) ion per subunit.</text>
</comment>
<comment type="pathway">
    <text evidence="1">Amino-acid biosynthesis; L-leucine biosynthesis; L-leucine from 3-methyl-2-oxobutanoate: step 3/4.</text>
</comment>
<comment type="subunit">
    <text evidence="1">Homodimer.</text>
</comment>
<comment type="subcellular location">
    <subcellularLocation>
        <location evidence="1">Cytoplasm</location>
    </subcellularLocation>
</comment>
<comment type="similarity">
    <text evidence="1">Belongs to the isocitrate and isopropylmalate dehydrogenases family. LeuB type 1 subfamily.</text>
</comment>
<evidence type="ECO:0000255" key="1">
    <source>
        <dbReference type="HAMAP-Rule" id="MF_01033"/>
    </source>
</evidence>
<protein>
    <recommendedName>
        <fullName evidence="1">3-isopropylmalate dehydrogenase</fullName>
        <ecNumber evidence="1">1.1.1.85</ecNumber>
    </recommendedName>
    <alternativeName>
        <fullName evidence="1">3-IPM-DH</fullName>
    </alternativeName>
    <alternativeName>
        <fullName evidence="1">Beta-IPM dehydrogenase</fullName>
        <shortName evidence="1">IMDH</shortName>
    </alternativeName>
</protein>
<proteinExistence type="inferred from homology"/>
<keyword id="KW-0028">Amino-acid biosynthesis</keyword>
<keyword id="KW-0100">Branched-chain amino acid biosynthesis</keyword>
<keyword id="KW-0963">Cytoplasm</keyword>
<keyword id="KW-0432">Leucine biosynthesis</keyword>
<keyword id="KW-0460">Magnesium</keyword>
<keyword id="KW-0464">Manganese</keyword>
<keyword id="KW-0479">Metal-binding</keyword>
<keyword id="KW-0520">NAD</keyword>
<keyword id="KW-0560">Oxidoreductase</keyword>
<keyword id="KW-1185">Reference proteome</keyword>
<organism>
    <name type="scientific">Prochlorococcus marinus (strain SARG / CCMP1375 / SS120)</name>
    <dbReference type="NCBI Taxonomy" id="167539"/>
    <lineage>
        <taxon>Bacteria</taxon>
        <taxon>Bacillati</taxon>
        <taxon>Cyanobacteriota</taxon>
        <taxon>Cyanophyceae</taxon>
        <taxon>Synechococcales</taxon>
        <taxon>Prochlorococcaceae</taxon>
        <taxon>Prochlorococcus</taxon>
    </lineage>
</organism>
<reference key="1">
    <citation type="journal article" date="2003" name="Proc. Natl. Acad. Sci. U.S.A.">
        <title>Genome sequence of the cyanobacterium Prochlorococcus marinus SS120, a nearly minimal oxyphototrophic genome.</title>
        <authorList>
            <person name="Dufresne A."/>
            <person name="Salanoubat M."/>
            <person name="Partensky F."/>
            <person name="Artiguenave F."/>
            <person name="Axmann I.M."/>
            <person name="Barbe V."/>
            <person name="Duprat S."/>
            <person name="Galperin M.Y."/>
            <person name="Koonin E.V."/>
            <person name="Le Gall F."/>
            <person name="Makarova K.S."/>
            <person name="Ostrowski M."/>
            <person name="Oztas S."/>
            <person name="Robert C."/>
            <person name="Rogozin I.B."/>
            <person name="Scanlan D.J."/>
            <person name="Tandeau de Marsac N."/>
            <person name="Weissenbach J."/>
            <person name="Wincker P."/>
            <person name="Wolf Y.I."/>
            <person name="Hess W.R."/>
        </authorList>
    </citation>
    <scope>NUCLEOTIDE SEQUENCE [LARGE SCALE GENOMIC DNA]</scope>
    <source>
        <strain>SARG / CCMP1375 / SS120</strain>
    </source>
</reference>
<name>LEU3_PROMA</name>
<dbReference type="EC" id="1.1.1.85" evidence="1"/>
<dbReference type="EMBL" id="AE017126">
    <property type="protein sequence ID" value="AAP99906.1"/>
    <property type="molecule type" value="Genomic_DNA"/>
</dbReference>
<dbReference type="RefSeq" id="NP_875254.1">
    <property type="nucleotide sequence ID" value="NC_005042.1"/>
</dbReference>
<dbReference type="RefSeq" id="WP_011125014.1">
    <property type="nucleotide sequence ID" value="NC_005042.1"/>
</dbReference>
<dbReference type="SMR" id="Q7VC80"/>
<dbReference type="STRING" id="167539.Pro_0862"/>
<dbReference type="EnsemblBacteria" id="AAP99906">
    <property type="protein sequence ID" value="AAP99906"/>
    <property type="gene ID" value="Pro_0862"/>
</dbReference>
<dbReference type="KEGG" id="pma:Pro_0862"/>
<dbReference type="PATRIC" id="fig|167539.5.peg.911"/>
<dbReference type="eggNOG" id="COG0473">
    <property type="taxonomic scope" value="Bacteria"/>
</dbReference>
<dbReference type="HOGENOM" id="CLU_031953_0_3_3"/>
<dbReference type="OrthoDB" id="9806254at2"/>
<dbReference type="UniPathway" id="UPA00048">
    <property type="reaction ID" value="UER00072"/>
</dbReference>
<dbReference type="Proteomes" id="UP000001420">
    <property type="component" value="Chromosome"/>
</dbReference>
<dbReference type="GO" id="GO:0005829">
    <property type="term" value="C:cytosol"/>
    <property type="evidence" value="ECO:0007669"/>
    <property type="project" value="TreeGrafter"/>
</dbReference>
<dbReference type="GO" id="GO:0003862">
    <property type="term" value="F:3-isopropylmalate dehydrogenase activity"/>
    <property type="evidence" value="ECO:0007669"/>
    <property type="project" value="UniProtKB-UniRule"/>
</dbReference>
<dbReference type="GO" id="GO:0000287">
    <property type="term" value="F:magnesium ion binding"/>
    <property type="evidence" value="ECO:0007669"/>
    <property type="project" value="InterPro"/>
</dbReference>
<dbReference type="GO" id="GO:0051287">
    <property type="term" value="F:NAD binding"/>
    <property type="evidence" value="ECO:0007669"/>
    <property type="project" value="InterPro"/>
</dbReference>
<dbReference type="GO" id="GO:0009098">
    <property type="term" value="P:L-leucine biosynthetic process"/>
    <property type="evidence" value="ECO:0007669"/>
    <property type="project" value="UniProtKB-UniRule"/>
</dbReference>
<dbReference type="FunFam" id="3.40.718.10:FF:000006">
    <property type="entry name" value="3-isopropylmalate dehydrogenase"/>
    <property type="match status" value="1"/>
</dbReference>
<dbReference type="Gene3D" id="3.40.718.10">
    <property type="entry name" value="Isopropylmalate Dehydrogenase"/>
    <property type="match status" value="1"/>
</dbReference>
<dbReference type="HAMAP" id="MF_01033">
    <property type="entry name" value="LeuB_type1"/>
    <property type="match status" value="1"/>
</dbReference>
<dbReference type="InterPro" id="IPR019818">
    <property type="entry name" value="IsoCit/isopropylmalate_DH_CS"/>
</dbReference>
<dbReference type="InterPro" id="IPR024084">
    <property type="entry name" value="IsoPropMal-DH-like_dom"/>
</dbReference>
<dbReference type="InterPro" id="IPR004429">
    <property type="entry name" value="Isopropylmalate_DH"/>
</dbReference>
<dbReference type="NCBIfam" id="TIGR00169">
    <property type="entry name" value="leuB"/>
    <property type="match status" value="1"/>
</dbReference>
<dbReference type="PANTHER" id="PTHR42979">
    <property type="entry name" value="3-ISOPROPYLMALATE DEHYDROGENASE"/>
    <property type="match status" value="1"/>
</dbReference>
<dbReference type="PANTHER" id="PTHR42979:SF1">
    <property type="entry name" value="3-ISOPROPYLMALATE DEHYDROGENASE"/>
    <property type="match status" value="1"/>
</dbReference>
<dbReference type="Pfam" id="PF00180">
    <property type="entry name" value="Iso_dh"/>
    <property type="match status" value="1"/>
</dbReference>
<dbReference type="SMART" id="SM01329">
    <property type="entry name" value="Iso_dh"/>
    <property type="match status" value="1"/>
</dbReference>
<dbReference type="SUPFAM" id="SSF53659">
    <property type="entry name" value="Isocitrate/Isopropylmalate dehydrogenase-like"/>
    <property type="match status" value="1"/>
</dbReference>
<dbReference type="PROSITE" id="PS00470">
    <property type="entry name" value="IDH_IMDH"/>
    <property type="match status" value="1"/>
</dbReference>
<feature type="chain" id="PRO_0000083722" description="3-isopropylmalate dehydrogenase">
    <location>
        <begin position="1"/>
        <end position="362"/>
    </location>
</feature>
<feature type="binding site" evidence="1">
    <location>
        <position position="97"/>
    </location>
    <ligand>
        <name>substrate</name>
    </ligand>
</feature>
<feature type="binding site" evidence="1">
    <location>
        <position position="107"/>
    </location>
    <ligand>
        <name>substrate</name>
    </ligand>
</feature>
<feature type="binding site" evidence="1">
    <location>
        <position position="135"/>
    </location>
    <ligand>
        <name>substrate</name>
    </ligand>
</feature>
<feature type="binding site" evidence="1">
    <location>
        <position position="225"/>
    </location>
    <ligand>
        <name>Mg(2+)</name>
        <dbReference type="ChEBI" id="CHEBI:18420"/>
    </ligand>
</feature>
<feature type="binding site" evidence="1">
    <location>
        <position position="225"/>
    </location>
    <ligand>
        <name>substrate</name>
    </ligand>
</feature>
<feature type="binding site" evidence="1">
    <location>
        <position position="249"/>
    </location>
    <ligand>
        <name>Mg(2+)</name>
        <dbReference type="ChEBI" id="CHEBI:18420"/>
    </ligand>
</feature>
<feature type="binding site" evidence="1">
    <location>
        <position position="253"/>
    </location>
    <ligand>
        <name>Mg(2+)</name>
        <dbReference type="ChEBI" id="CHEBI:18420"/>
    </ligand>
</feature>
<feature type="binding site" evidence="1">
    <location>
        <begin position="283"/>
        <end position="295"/>
    </location>
    <ligand>
        <name>NAD(+)</name>
        <dbReference type="ChEBI" id="CHEBI:57540"/>
    </ligand>
</feature>
<feature type="site" description="Important for catalysis" evidence="1">
    <location>
        <position position="142"/>
    </location>
</feature>
<feature type="site" description="Important for catalysis" evidence="1">
    <location>
        <position position="193"/>
    </location>
</feature>
<accession>Q7VC80</accession>